<name>TDXH_PYRFU</name>
<feature type="chain" id="PRO_0000135164" description="Peroxiredoxin">
    <location>
        <begin position="1"/>
        <end position="216"/>
    </location>
</feature>
<feature type="domain" description="Thioredoxin" evidence="1">
    <location>
        <begin position="2"/>
        <end position="158"/>
    </location>
</feature>
<feature type="active site" description="Cysteine sulfenic acid (-SOH) intermediate" evidence="1">
    <location>
        <position position="46"/>
    </location>
</feature>
<feature type="binding site" evidence="1">
    <location>
        <position position="121"/>
    </location>
    <ligand>
        <name>substrate</name>
    </ligand>
</feature>
<feature type="disulfide bond" description="Interchain (with C-211); in linked form" evidence="1">
    <location>
        <position position="46"/>
    </location>
</feature>
<feature type="disulfide bond" description="Alternate" evidence="1">
    <location>
        <begin position="205"/>
        <end position="211"/>
    </location>
</feature>
<feature type="disulfide bond" description="Interchain (with C-46); in linked form" evidence="1">
    <location>
        <position position="211"/>
    </location>
</feature>
<keyword id="KW-0049">Antioxidant</keyword>
<keyword id="KW-0963">Cytoplasm</keyword>
<keyword id="KW-1015">Disulfide bond</keyword>
<keyword id="KW-0560">Oxidoreductase</keyword>
<keyword id="KW-0575">Peroxidase</keyword>
<keyword id="KW-0676">Redox-active center</keyword>
<keyword id="KW-1185">Reference proteome</keyword>
<dbReference type="EC" id="1.11.1.24" evidence="1"/>
<dbReference type="EMBL" id="AE009950">
    <property type="protein sequence ID" value="AAL81157.1"/>
    <property type="molecule type" value="Genomic_DNA"/>
</dbReference>
<dbReference type="RefSeq" id="WP_011012170.1">
    <property type="nucleotide sequence ID" value="NZ_CP023154.1"/>
</dbReference>
<dbReference type="SMR" id="Q8U218"/>
<dbReference type="STRING" id="186497.PF1033"/>
<dbReference type="PaxDb" id="186497-PF1033"/>
<dbReference type="KEGG" id="pfu:PF1033"/>
<dbReference type="PATRIC" id="fig|186497.12.peg.1094"/>
<dbReference type="eggNOG" id="arCOG00312">
    <property type="taxonomic scope" value="Archaea"/>
</dbReference>
<dbReference type="HOGENOM" id="CLU_042529_4_4_2"/>
<dbReference type="OrthoDB" id="6924at2157"/>
<dbReference type="PhylomeDB" id="Q8U218"/>
<dbReference type="Proteomes" id="UP000001013">
    <property type="component" value="Chromosome"/>
</dbReference>
<dbReference type="GO" id="GO:0005829">
    <property type="term" value="C:cytosol"/>
    <property type="evidence" value="ECO:0007669"/>
    <property type="project" value="TreeGrafter"/>
</dbReference>
<dbReference type="GO" id="GO:0008379">
    <property type="term" value="F:thioredoxin peroxidase activity"/>
    <property type="evidence" value="ECO:0007669"/>
    <property type="project" value="TreeGrafter"/>
</dbReference>
<dbReference type="GO" id="GO:0045454">
    <property type="term" value="P:cell redox homeostasis"/>
    <property type="evidence" value="ECO:0007669"/>
    <property type="project" value="TreeGrafter"/>
</dbReference>
<dbReference type="GO" id="GO:0033554">
    <property type="term" value="P:cellular response to stress"/>
    <property type="evidence" value="ECO:0007669"/>
    <property type="project" value="TreeGrafter"/>
</dbReference>
<dbReference type="GO" id="GO:0042744">
    <property type="term" value="P:hydrogen peroxide catabolic process"/>
    <property type="evidence" value="ECO:0007669"/>
    <property type="project" value="TreeGrafter"/>
</dbReference>
<dbReference type="GO" id="GO:0006979">
    <property type="term" value="P:response to oxidative stress"/>
    <property type="evidence" value="ECO:0007669"/>
    <property type="project" value="TreeGrafter"/>
</dbReference>
<dbReference type="CDD" id="cd03016">
    <property type="entry name" value="PRX_1cys"/>
    <property type="match status" value="1"/>
</dbReference>
<dbReference type="FunFam" id="3.30.1020.10:FF:000002">
    <property type="entry name" value="Peroxiredoxin"/>
    <property type="match status" value="1"/>
</dbReference>
<dbReference type="FunFam" id="3.40.30.10:FF:000011">
    <property type="entry name" value="Peroxiredoxin PRX1"/>
    <property type="match status" value="1"/>
</dbReference>
<dbReference type="Gene3D" id="3.30.1020.10">
    <property type="entry name" value="Antioxidant, Horf6, Chain A, domain2"/>
    <property type="match status" value="1"/>
</dbReference>
<dbReference type="Gene3D" id="3.40.30.10">
    <property type="entry name" value="Glutaredoxin"/>
    <property type="match status" value="1"/>
</dbReference>
<dbReference type="HAMAP" id="MF_00401">
    <property type="entry name" value="Peroxiredoxin"/>
    <property type="match status" value="1"/>
</dbReference>
<dbReference type="InterPro" id="IPR000866">
    <property type="entry name" value="AhpC/TSA"/>
</dbReference>
<dbReference type="InterPro" id="IPR050217">
    <property type="entry name" value="Peroxiredoxin"/>
</dbReference>
<dbReference type="InterPro" id="IPR024706">
    <property type="entry name" value="Peroxiredoxin_AhpC-typ"/>
</dbReference>
<dbReference type="InterPro" id="IPR019479">
    <property type="entry name" value="Peroxiredoxin_C"/>
</dbReference>
<dbReference type="InterPro" id="IPR022915">
    <property type="entry name" value="Peroxiredoxin_TDXH"/>
</dbReference>
<dbReference type="InterPro" id="IPR045020">
    <property type="entry name" value="PRX_1cys"/>
</dbReference>
<dbReference type="InterPro" id="IPR036249">
    <property type="entry name" value="Thioredoxin-like_sf"/>
</dbReference>
<dbReference type="InterPro" id="IPR013766">
    <property type="entry name" value="Thioredoxin_domain"/>
</dbReference>
<dbReference type="NCBIfam" id="NF009668">
    <property type="entry name" value="PRK13189.1"/>
    <property type="match status" value="1"/>
</dbReference>
<dbReference type="PANTHER" id="PTHR10681">
    <property type="entry name" value="THIOREDOXIN PEROXIDASE"/>
    <property type="match status" value="1"/>
</dbReference>
<dbReference type="PANTHER" id="PTHR10681:SF128">
    <property type="entry name" value="THIOREDOXIN-DEPENDENT PEROXIDE REDUCTASE, MITOCHONDRIAL"/>
    <property type="match status" value="1"/>
</dbReference>
<dbReference type="Pfam" id="PF10417">
    <property type="entry name" value="1-cysPrx_C"/>
    <property type="match status" value="1"/>
</dbReference>
<dbReference type="Pfam" id="PF00578">
    <property type="entry name" value="AhpC-TSA"/>
    <property type="match status" value="1"/>
</dbReference>
<dbReference type="PIRSF" id="PIRSF000239">
    <property type="entry name" value="AHPC"/>
    <property type="match status" value="1"/>
</dbReference>
<dbReference type="SUPFAM" id="SSF52833">
    <property type="entry name" value="Thioredoxin-like"/>
    <property type="match status" value="1"/>
</dbReference>
<dbReference type="PROSITE" id="PS51352">
    <property type="entry name" value="THIOREDOXIN_2"/>
    <property type="match status" value="1"/>
</dbReference>
<accession>Q8U218</accession>
<comment type="function">
    <text evidence="1">Thiol-specific peroxidase that catalyzes the reduction of hydrogen peroxide and organic hydroperoxides to water and alcohols, respectively. Plays a role in cell protection against oxidative stress by detoxifying peroxides.</text>
</comment>
<comment type="catalytic activity">
    <reaction evidence="1">
        <text>a hydroperoxide + [thioredoxin]-dithiol = an alcohol + [thioredoxin]-disulfide + H2O</text>
        <dbReference type="Rhea" id="RHEA:62620"/>
        <dbReference type="Rhea" id="RHEA-COMP:10698"/>
        <dbReference type="Rhea" id="RHEA-COMP:10700"/>
        <dbReference type="ChEBI" id="CHEBI:15377"/>
        <dbReference type="ChEBI" id="CHEBI:29950"/>
        <dbReference type="ChEBI" id="CHEBI:30879"/>
        <dbReference type="ChEBI" id="CHEBI:35924"/>
        <dbReference type="ChEBI" id="CHEBI:50058"/>
        <dbReference type="EC" id="1.11.1.24"/>
    </reaction>
</comment>
<comment type="subunit">
    <text evidence="1">Homodecamer. Pentamer of dimers that assemble into a ring structure.</text>
</comment>
<comment type="subcellular location">
    <subcellularLocation>
        <location evidence="1">Cytoplasm</location>
    </subcellularLocation>
</comment>
<comment type="miscellaneous">
    <text evidence="1">The active site is a conserved redox-active cysteine residue, the peroxidatic cysteine (C(P)), which makes the nucleophilic attack on the peroxide substrate. The peroxide oxidizes the C(P)-SH to cysteine sulfenic acid (C(P)-SOH), which then reacts with another cysteine residue, the resolving cysteine (C(R)), to form a disulfide bridge. The disulfide is subsequently reduced by an appropriate electron donor to complete the catalytic cycle. Although the primary sequence of this enzyme is similar to those of the 1-Cys Prx6 enzymes, its catalytic properties resemble those of the typical 2-Cys Prxs and C(R) is provided by the other dimeric subunit to form an intersubunit disulfide. The disulfide is subsequently reduced by thioredoxin.</text>
</comment>
<comment type="similarity">
    <text evidence="1">Belongs to the peroxiredoxin family. Prx6 subfamily.</text>
</comment>
<reference key="1">
    <citation type="journal article" date="1999" name="Genetics">
        <title>Divergence of the hyperthermophilic archaea Pyrococcus furiosus and P. horikoshii inferred from complete genomic sequences.</title>
        <authorList>
            <person name="Maeder D.L."/>
            <person name="Weiss R.B."/>
            <person name="Dunn D.M."/>
            <person name="Cherry J.L."/>
            <person name="Gonzalez J.M."/>
            <person name="DiRuggiero J."/>
            <person name="Robb F.T."/>
        </authorList>
    </citation>
    <scope>NUCLEOTIDE SEQUENCE [LARGE SCALE GENOMIC DNA]</scope>
    <source>
        <strain>ATCC 43587 / DSM 3638 / JCM 8422 / Vc1</strain>
    </source>
</reference>
<evidence type="ECO:0000255" key="1">
    <source>
        <dbReference type="HAMAP-Rule" id="MF_00401"/>
    </source>
</evidence>
<gene>
    <name type="ordered locus">PF1033</name>
</gene>
<organism>
    <name type="scientific">Pyrococcus furiosus (strain ATCC 43587 / DSM 3638 / JCM 8422 / Vc1)</name>
    <dbReference type="NCBI Taxonomy" id="186497"/>
    <lineage>
        <taxon>Archaea</taxon>
        <taxon>Methanobacteriati</taxon>
        <taxon>Methanobacteriota</taxon>
        <taxon>Thermococci</taxon>
        <taxon>Thermococcales</taxon>
        <taxon>Thermococcaceae</taxon>
        <taxon>Pyrococcus</taxon>
    </lineage>
</organism>
<protein>
    <recommendedName>
        <fullName evidence="1">Peroxiredoxin</fullName>
        <ecNumber evidence="1">1.11.1.24</ecNumber>
    </recommendedName>
    <alternativeName>
        <fullName evidence="1">Thioredoxin peroxidase</fullName>
    </alternativeName>
    <alternativeName>
        <fullName evidence="1">Thioredoxin-dependent peroxiredoxin</fullName>
    </alternativeName>
</protein>
<proteinExistence type="inferred from homology"/>
<sequence>MIVIGEKFPEVEVKTTHGVIKLPDHFTKQGKWFMLFSHPADFTPVCTTEFYGLQIRLEKFRELGVEPIGLSVDQVFSHLKWMEWIKEKLGVEIEFPVIADDRGDLAEKLGMIPSGSTITARAVFIVDDKGIIRAIVYYPAEVGRDWDEILRLVKALKISTEKGVALPHKWPNNELIGDKVIVPPASSVEQIKEREEAKAKGEIECYDWWFCYKKLE</sequence>